<evidence type="ECO:0000269" key="1">
    <source>
    </source>
</evidence>
<evidence type="ECO:0000269" key="2">
    <source>
    </source>
</evidence>
<evidence type="ECO:0000269" key="3">
    <source>
    </source>
</evidence>
<evidence type="ECO:0000305" key="4"/>
<keyword id="KW-0002">3D-structure</keyword>
<keyword id="KW-1035">Host cytoplasm</keyword>
<keyword id="KW-0426">Late protein</keyword>
<keyword id="KW-1185">Reference proteome</keyword>
<keyword id="KW-1226">Viral baseplate protein</keyword>
<keyword id="KW-1188">Viral release from host cell</keyword>
<keyword id="KW-1245">Viral tail assembly</keyword>
<keyword id="KW-1227">Viral tail protein</keyword>
<keyword id="KW-0946">Virion</keyword>
<accession>Q9T1V1</accession>
<proteinExistence type="evidence at protein level"/>
<sequence length="180" mass="20468">MAVTPWQTAFLQLLPSGLAWNKSPDSKLSALAQAISDVIATAADDARQMLRERFPSTSRWYLGEWESFLGLPDCTSENGTLSERQRAAANKMRMTGNLSRRFYEWLAAQYGFTVRLTDSTEGQWVTQVNIYGIKNYRNATVLDNVLTPLRVYESGALECLLEKYKPAHQIYKFVYHDGDN</sequence>
<protein>
    <recommendedName>
        <fullName>Baseplate protein gp48</fullName>
    </recommendedName>
    <alternativeName>
        <fullName>Gene product 48</fullName>
        <shortName>gp48</shortName>
    </alternativeName>
    <alternativeName>
        <fullName>Gene product R</fullName>
        <shortName>gpR</shortName>
    </alternativeName>
</protein>
<comment type="function">
    <text>Component of the baseplate.</text>
</comment>
<comment type="subunit">
    <text evidence="1">Part of a complex composed of three DNA circularization protein N, three baseplate hub protein gp44 and three sub-complex wedge (made of two copies of each baseplate protein gp46, gp47 and gp48) that forms the baseplate.</text>
</comment>
<comment type="subcellular location">
    <subcellularLocation>
        <location evidence="1">Virion</location>
    </subcellularLocation>
    <subcellularLocation>
        <location evidence="4">Host cytoplasm</location>
    </subcellularLocation>
    <text evidence="1">Baseplate.</text>
</comment>
<comment type="induction">
    <text evidence="3">Expressed in the late phase of the viral replicative cycle. Expression of late genes is activated by the viral late transcription activator C.</text>
</comment>
<comment type="disruption phenotype">
    <text evidence="2">No tail is synthesized.</text>
</comment>
<organismHost>
    <name type="scientific">Enterobacteriaceae</name>
    <dbReference type="NCBI Taxonomy" id="543"/>
</organismHost>
<feature type="chain" id="PRO_0000077847" description="Baseplate protein gp48">
    <location>
        <begin position="1"/>
        <end position="180"/>
    </location>
</feature>
<organism>
    <name type="scientific">Escherichia phage Mu</name>
    <name type="common">Bacteriophage Mu</name>
    <dbReference type="NCBI Taxonomy" id="2681603"/>
    <lineage>
        <taxon>Viruses</taxon>
        <taxon>Duplodnaviria</taxon>
        <taxon>Heunggongvirae</taxon>
        <taxon>Uroviricota</taxon>
        <taxon>Caudoviricetes</taxon>
        <taxon>Muvirus</taxon>
        <taxon>Muvirus mu</taxon>
    </lineage>
</organism>
<reference key="1">
    <citation type="journal article" date="2002" name="J. Mol. Biol.">
        <title>Bacteriophage Mu genome sequence: analysis and comparison with Mu-like prophages in Haemophilus, Neisseria and Deinococcus.</title>
        <authorList>
            <person name="Morgan G.J."/>
            <person name="Hatfull G.F."/>
            <person name="Casjens S."/>
            <person name="Hendrix R.W."/>
        </authorList>
    </citation>
    <scope>NUCLEOTIDE SEQUENCE [LARGE SCALE GENOMIC DNA]</scope>
</reference>
<reference key="2">
    <citation type="journal article" date="1985" name="Virology">
        <title>Morphogenetic structures present in lysates of amber mutants of bacteriophage Mu.</title>
        <authorList>
            <person name="Grundy F.J."/>
            <person name="Howe M.M."/>
        </authorList>
    </citation>
    <scope>DISRUPTION PHENOTYPE</scope>
</reference>
<reference key="3">
    <citation type="journal article" date="1993" name="Genetics">
        <title>Mutational analysis of a C-dependent late promoter of bacteriophage Mu.</title>
        <authorList>
            <person name="Chiang L.W."/>
            <person name="Howe M.M."/>
        </authorList>
    </citation>
    <scope>INDUCTION</scope>
</reference>
<reference key="4">
    <citation type="journal article" date="2012" name="Adv. Exp. Med. Biol.">
        <title>Contractile tail machines of bacteriophages.</title>
        <authorList>
            <person name="Leiman P.G."/>
            <person name="Shneider M.M."/>
        </authorList>
    </citation>
    <scope>REVIEW</scope>
</reference>
<reference key="5">
    <citation type="journal article" date="2016" name="Proc. Natl. Acad. Sci. U.S.A.">
        <title>Baseplate assembly of phage Mu: Defining the conserved core components of contractile-tailed phages and related bacterial systems.</title>
        <authorList>
            <person name="Buettner C.R."/>
            <person name="Wu Y."/>
            <person name="Maxwell K.L."/>
            <person name="Davidson A.R."/>
        </authorList>
    </citation>
    <scope>SUBUNIT</scope>
    <scope>SUBCELLULAR LOCATION</scope>
</reference>
<name>BP48_BPMU</name>
<gene>
    <name type="ordered locus">Mup48</name>
</gene>
<dbReference type="EMBL" id="AF083977">
    <property type="protein sequence ID" value="AAF01126.1"/>
    <property type="molecule type" value="Genomic_DNA"/>
</dbReference>
<dbReference type="RefSeq" id="NP_050652.1">
    <property type="nucleotide sequence ID" value="NC_000929.1"/>
</dbReference>
<dbReference type="PDB" id="9KI1">
    <property type="method" value="EM"/>
    <property type="resolution" value="3.30 A"/>
    <property type="chains" value="a/b/c/d/e/f=1-180"/>
</dbReference>
<dbReference type="PDBsum" id="9KI1"/>
<dbReference type="EMDB" id="EMD-62362"/>
<dbReference type="GeneID" id="2636277"/>
<dbReference type="KEGG" id="vg:2636277"/>
<dbReference type="Proteomes" id="UP000002611">
    <property type="component" value="Genome"/>
</dbReference>
<dbReference type="GO" id="GO:0030430">
    <property type="term" value="C:host cell cytoplasm"/>
    <property type="evidence" value="ECO:0007669"/>
    <property type="project" value="UniProtKB-SubCell"/>
</dbReference>
<dbReference type="GO" id="GO:0098025">
    <property type="term" value="C:virus tail, baseplate"/>
    <property type="evidence" value="ECO:0007669"/>
    <property type="project" value="UniProtKB-KW"/>
</dbReference>
<dbReference type="GO" id="GO:0098003">
    <property type="term" value="P:viral tail assembly"/>
    <property type="evidence" value="ECO:0007669"/>
    <property type="project" value="UniProtKB-KW"/>
</dbReference>
<dbReference type="InterPro" id="IPR018755">
    <property type="entry name" value="Phage_Mu_Gp48"/>
</dbReference>
<dbReference type="Pfam" id="PF10076">
    <property type="entry name" value="Phage_Mu_Gp48"/>
    <property type="match status" value="1"/>
</dbReference>